<keyword id="KW-0010">Activator</keyword>
<keyword id="KW-0112">Calmodulin-binding</keyword>
<keyword id="KW-0963">Cytoplasm</keyword>
<keyword id="KW-0221">Differentiation</keyword>
<keyword id="KW-0238">DNA-binding</keyword>
<keyword id="KW-0539">Nucleus</keyword>
<keyword id="KW-0726">Sexual differentiation</keyword>
<keyword id="KW-0804">Transcription</keyword>
<keyword id="KW-0805">Transcription regulation</keyword>
<proteinExistence type="inferred from homology"/>
<gene>
    <name type="primary">SRY</name>
    <name type="synonym">TDF</name>
</gene>
<protein>
    <recommendedName>
        <fullName>Sex-determining region Y protein</fullName>
    </recommendedName>
    <alternativeName>
        <fullName>Testis-determining factor</fullName>
    </alternativeName>
</protein>
<sequence length="232" mass="27037">MFGVLNSNDHRAAVQQRNIPAFGRTSFEPWTDNPTSNYRCETGGNGRDSGQNRVRRPMNAFMVWSRDQRRKVALENPQMQNSEISKQLGYQWKMLTEAEKWPFFEEAQRLQAMHREKYPDYKYRPRRKALPQKSDKLLPAASSSMLCRQVLVDEKWYPFTYRDSCSRAAHSRMEDQLSSSQPVNIANSLLQQEHHYRSTSLRDSPETLAAHLSADPPFYPKEQLGLSDAYFP</sequence>
<feature type="chain" id="PRO_0000048702" description="Sex-determining region Y protein">
    <location>
        <begin position="1"/>
        <end position="232"/>
    </location>
</feature>
<feature type="DNA-binding region" description="HMG box" evidence="3">
    <location>
        <begin position="54"/>
        <end position="122"/>
    </location>
</feature>
<feature type="region of interest" description="Disordered" evidence="4">
    <location>
        <begin position="24"/>
        <end position="53"/>
    </location>
</feature>
<organism>
    <name type="scientific">Phoca vitulina</name>
    <name type="common">Harbor seal</name>
    <dbReference type="NCBI Taxonomy" id="9720"/>
    <lineage>
        <taxon>Eukaryota</taxon>
        <taxon>Metazoa</taxon>
        <taxon>Chordata</taxon>
        <taxon>Craniata</taxon>
        <taxon>Vertebrata</taxon>
        <taxon>Euteleostomi</taxon>
        <taxon>Mammalia</taxon>
        <taxon>Eutheria</taxon>
        <taxon>Laurasiatheria</taxon>
        <taxon>Carnivora</taxon>
        <taxon>Caniformia</taxon>
        <taxon>Pinnipedia</taxon>
        <taxon>Phocidae</taxon>
        <taxon>Phocinae</taxon>
        <taxon>Phoca</taxon>
    </lineage>
</organism>
<evidence type="ECO:0000250" key="1">
    <source>
        <dbReference type="UniProtKB" id="P36394"/>
    </source>
</evidence>
<evidence type="ECO:0000250" key="2">
    <source>
        <dbReference type="UniProtKB" id="Q05066"/>
    </source>
</evidence>
<evidence type="ECO:0000255" key="3">
    <source>
        <dbReference type="PROSITE-ProRule" id="PRU00267"/>
    </source>
</evidence>
<evidence type="ECO:0000256" key="4">
    <source>
        <dbReference type="SAM" id="MobiDB-lite"/>
    </source>
</evidence>
<evidence type="ECO:0000305" key="5"/>
<comment type="function">
    <text evidence="1 2">Transcriptional regulator that controls a genetic switch in male development. It is necessary and sufficient for initiating male sex determination by directing the development of supporting cell precursors (pre-Sertoli cells) as Sertoli rather than granulosa cells. Involved in different aspects of gene regulation including promoter activation or repression. Binds to the DNA consensus sequence 5'-[AT]AACAA[AT]-3'. SRY HMG box recognizes DNA by partial intercalation in the minor groove and promotes DNA bending. Also involved in pre-mRNA splicing (By similarity). In male adult brain involved in the maintenance of motor functions of dopaminergic neurons (By similarity).</text>
</comment>
<comment type="subunit">
    <text evidence="2">Interacts with CALM, EP300, HDAC3, KPNB1, ZNF208 isoform KRAB-O, PARP1, SLC9A3R2 and WT1. The interaction with EP300 modulates its DNA-binding activity. The interaction with KPNB1 is sensitive to dissociation by Ran in the GTP-bound form. Interaction with PARP1 impaired its DNA-binding activity.</text>
</comment>
<comment type="subcellular location">
    <subcellularLocation>
        <location evidence="2">Nucleus speckle</location>
    </subcellularLocation>
    <subcellularLocation>
        <location evidence="2">Cytoplasm</location>
    </subcellularLocation>
    <subcellularLocation>
        <location evidence="2">Nucleus</location>
    </subcellularLocation>
</comment>
<comment type="similarity">
    <text evidence="5">Belongs to the SRY family.</text>
</comment>
<comment type="online information" name="Protein Spotlight">
    <link uri="https://www.proteinspotlight.org/back_issues/080"/>
    <text>The tenuous nature of sex - Issue 80 of March 2007</text>
</comment>
<accession>Q6TC33</accession>
<dbReference type="EMBL" id="AY424662">
    <property type="protein sequence ID" value="AAR10373.1"/>
    <property type="molecule type" value="Genomic_DNA"/>
</dbReference>
<dbReference type="SMR" id="Q6TC33"/>
<dbReference type="GO" id="GO:0005737">
    <property type="term" value="C:cytoplasm"/>
    <property type="evidence" value="ECO:0007669"/>
    <property type="project" value="UniProtKB-SubCell"/>
</dbReference>
<dbReference type="GO" id="GO:0016607">
    <property type="term" value="C:nuclear speck"/>
    <property type="evidence" value="ECO:0007669"/>
    <property type="project" value="UniProtKB-SubCell"/>
</dbReference>
<dbReference type="GO" id="GO:0005634">
    <property type="term" value="C:nucleus"/>
    <property type="evidence" value="ECO:0000250"/>
    <property type="project" value="UniProtKB"/>
</dbReference>
<dbReference type="GO" id="GO:0005516">
    <property type="term" value="F:calmodulin binding"/>
    <property type="evidence" value="ECO:0007669"/>
    <property type="project" value="UniProtKB-KW"/>
</dbReference>
<dbReference type="GO" id="GO:0001228">
    <property type="term" value="F:DNA-binding transcription activator activity, RNA polymerase II-specific"/>
    <property type="evidence" value="ECO:0007669"/>
    <property type="project" value="TreeGrafter"/>
</dbReference>
<dbReference type="GO" id="GO:0000978">
    <property type="term" value="F:RNA polymerase II cis-regulatory region sequence-specific DNA binding"/>
    <property type="evidence" value="ECO:0007669"/>
    <property type="project" value="TreeGrafter"/>
</dbReference>
<dbReference type="GO" id="GO:0030154">
    <property type="term" value="P:cell differentiation"/>
    <property type="evidence" value="ECO:0007669"/>
    <property type="project" value="UniProtKB-KW"/>
</dbReference>
<dbReference type="GO" id="GO:0030238">
    <property type="term" value="P:male sex determination"/>
    <property type="evidence" value="ECO:0007669"/>
    <property type="project" value="InterPro"/>
</dbReference>
<dbReference type="GO" id="GO:0007548">
    <property type="term" value="P:sex differentiation"/>
    <property type="evidence" value="ECO:0007669"/>
    <property type="project" value="UniProtKB-KW"/>
</dbReference>
<dbReference type="CDD" id="cd22034">
    <property type="entry name" value="HMG-box_SoxA_SRY"/>
    <property type="match status" value="1"/>
</dbReference>
<dbReference type="FunFam" id="1.10.30.10:FF:000002">
    <property type="entry name" value="transcription factor Sox-2"/>
    <property type="match status" value="1"/>
</dbReference>
<dbReference type="Gene3D" id="1.10.30.10">
    <property type="entry name" value="High mobility group box domain"/>
    <property type="match status" value="1"/>
</dbReference>
<dbReference type="InterPro" id="IPR009071">
    <property type="entry name" value="HMG_box_dom"/>
</dbReference>
<dbReference type="InterPro" id="IPR036910">
    <property type="entry name" value="HMG_box_dom_sf"/>
</dbReference>
<dbReference type="InterPro" id="IPR017253">
    <property type="entry name" value="SRY"/>
</dbReference>
<dbReference type="InterPro" id="IPR050140">
    <property type="entry name" value="SRY-related_HMG-box_TF-like"/>
</dbReference>
<dbReference type="PANTHER" id="PTHR10270:SF161">
    <property type="entry name" value="SEX-DETERMINING REGION Y PROTEIN"/>
    <property type="match status" value="1"/>
</dbReference>
<dbReference type="PANTHER" id="PTHR10270">
    <property type="entry name" value="SOX TRANSCRIPTION FACTOR"/>
    <property type="match status" value="1"/>
</dbReference>
<dbReference type="Pfam" id="PF00505">
    <property type="entry name" value="HMG_box"/>
    <property type="match status" value="1"/>
</dbReference>
<dbReference type="PIRSF" id="PIRSF037653">
    <property type="entry name" value="SRY"/>
    <property type="match status" value="1"/>
</dbReference>
<dbReference type="SMART" id="SM00398">
    <property type="entry name" value="HMG"/>
    <property type="match status" value="1"/>
</dbReference>
<dbReference type="SUPFAM" id="SSF47095">
    <property type="entry name" value="HMG-box"/>
    <property type="match status" value="1"/>
</dbReference>
<dbReference type="PROSITE" id="PS50118">
    <property type="entry name" value="HMG_BOX_2"/>
    <property type="match status" value="1"/>
</dbReference>
<reference key="1">
    <citation type="submission" date="2003-09" db="EMBL/GenBank/DDBJ databases">
        <title>A phylogeny of the pinnipeds from mitochondrial and single copy nuclear gene sequences.</title>
        <authorList>
            <person name="Kinnear M.W."/>
            <person name="Walker G."/>
            <person name="Amos W."/>
        </authorList>
    </citation>
    <scope>NUCLEOTIDE SEQUENCE [GENOMIC DNA]</scope>
</reference>
<name>SRY_PHOVI</name>